<accession>Q9BT09</accession>
<accession>O15412</accession>
<accession>Q0P6I2</accession>
<accession>Q8NF54</accession>
<accession>Q8WTU8</accession>
<accession>Q9P0F2</accession>
<keyword id="KW-0025">Alternative splicing</keyword>
<keyword id="KW-0143">Chaperone</keyword>
<keyword id="KW-0175">Coiled coil</keyword>
<keyword id="KW-0225">Disease variant</keyword>
<keyword id="KW-1015">Disulfide bond</keyword>
<keyword id="KW-0256">Endoplasmic reticulum</keyword>
<keyword id="KW-0887">Epilepsy</keyword>
<keyword id="KW-0325">Glycoprotein</keyword>
<keyword id="KW-0391">Immunity</keyword>
<keyword id="KW-0399">Innate immunity</keyword>
<keyword id="KW-1267">Proteomics identification</keyword>
<keyword id="KW-1185">Reference proteome</keyword>
<keyword id="KW-0732">Signal</keyword>
<name>CNPY3_HUMAN</name>
<feature type="signal peptide" evidence="2">
    <location>
        <begin position="1"/>
        <end position="30"/>
    </location>
</feature>
<feature type="chain" id="PRO_0000313780" description="Protein canopy homolog 3">
    <location>
        <begin position="31"/>
        <end position="278"/>
    </location>
</feature>
<feature type="domain" description="Saposin B-type">
    <location>
        <begin position="47"/>
        <end position="271"/>
    </location>
</feature>
<feature type="region of interest" description="Disordered" evidence="3">
    <location>
        <begin position="215"/>
        <end position="278"/>
    </location>
</feature>
<feature type="coiled-coil region" evidence="2">
    <location>
        <begin position="153"/>
        <end position="179"/>
    </location>
</feature>
<feature type="compositionally biased region" description="Low complexity" evidence="3">
    <location>
        <begin position="233"/>
        <end position="243"/>
    </location>
</feature>
<feature type="glycosylation site" description="N-linked (GlcNAc...) asparagine" evidence="4">
    <location>
        <position position="153"/>
    </location>
</feature>
<feature type="disulfide bond" evidence="1">
    <location>
        <begin position="49"/>
        <end position="206"/>
    </location>
</feature>
<feature type="disulfide bond" evidence="1">
    <location>
        <begin position="52"/>
        <end position="194"/>
    </location>
</feature>
<feature type="disulfide bond" evidence="1">
    <location>
        <begin position="104"/>
        <end position="166"/>
    </location>
</feature>
<feature type="splice variant" id="VSP_030132" description="In isoform 2." evidence="6">
    <original>VCKY</original>
    <variation>GTCG</variation>
    <location>
        <begin position="51"/>
        <end position="54"/>
    </location>
</feature>
<feature type="splice variant" id="VSP_030133" description="In isoform 2." evidence="6">
    <location>
        <begin position="55"/>
        <end position="278"/>
    </location>
</feature>
<feature type="sequence variant" id="VAR_080491" description="In DEE60; uncertain significance; dbSNP:rs1554292759." evidence="5">
    <original>G</original>
    <variation>R</variation>
    <location>
        <position position="125"/>
    </location>
</feature>
<feature type="sequence variant" id="VAR_037731" description="In dbSNP:rs1063252.">
    <original>M</original>
    <variation>I</variation>
    <location>
        <position position="145"/>
    </location>
</feature>
<feature type="sequence variant" id="VAR_037732" description="In dbSNP:rs9471969.">
    <original>S</original>
    <variation>I</variation>
    <location>
        <position position="231"/>
    </location>
</feature>
<feature type="sequence conflict" description="In Ref. 5; BAC03406." evidence="7" ref="5">
    <original>H</original>
    <variation>P</variation>
    <location>
        <position position="272"/>
    </location>
</feature>
<gene>
    <name type="primary">CNPY3</name>
    <name type="synonym">CTG4A</name>
    <name type="synonym">ERDA5</name>
    <name type="synonym">PRAT4A</name>
    <name type="synonym">TNRC5</name>
    <name type="ORF">HSPC084</name>
    <name type="ORF">UNQ1934/PRO4409</name>
</gene>
<comment type="function">
    <text evidence="1">Toll-like receptor (TLR)-specific co-chaperone for HSP90B1. Required for proper TLR folding, except that of TLR3, and hence controls TLR exit from the endoplasmic reticulum. Consequently, required for both innate and adaptive immune responses (By similarity).</text>
</comment>
<comment type="subunit">
    <text evidence="1">Interacts with HSP90B1; this interaction is disrupted in the presence of ATP. Interacts with TLR1, TLR2, TLR4 and TLR9 (By similarity). Strongest interaction with TLR4 (By similarity).</text>
</comment>
<comment type="interaction">
    <interactant intactId="EBI-2835965">
        <id>Q9BT09</id>
    </interactant>
    <interactant intactId="EBI-11954292">
        <id>Q86V38</id>
        <label>ATN1</label>
    </interactant>
    <organismsDiffer>false</organismsDiffer>
    <experiments>3</experiments>
</comment>
<comment type="interaction">
    <interactant intactId="EBI-2835965">
        <id>Q9BT09</id>
    </interactant>
    <interactant intactId="EBI-18400628">
        <id>O00501</id>
        <label>CLDN5</label>
    </interactant>
    <organismsDiffer>false</organismsDiffer>
    <experiments>3</experiments>
</comment>
<comment type="interaction">
    <interactant intactId="EBI-2835965">
        <id>Q9BT09</id>
    </interactant>
    <interactant intactId="EBI-10976677">
        <id>G5E9A7</id>
        <label>DMWD</label>
    </interactant>
    <organismsDiffer>false</organismsDiffer>
    <experiments>3</experiments>
</comment>
<comment type="interaction">
    <interactant intactId="EBI-2835965">
        <id>Q9BT09</id>
    </interactant>
    <interactant intactId="EBI-18304435">
        <id>Q5JX71</id>
        <label>FAM209A</label>
    </interactant>
    <organismsDiffer>false</organismsDiffer>
    <experiments>3</experiments>
</comment>
<comment type="interaction">
    <interactant intactId="EBI-2835965">
        <id>Q9BT09</id>
    </interactant>
    <interactant intactId="EBI-712073">
        <id>Q8NBJ4</id>
        <label>GOLM1</label>
    </interactant>
    <organismsDiffer>false</organismsDiffer>
    <experiments>3</experiments>
</comment>
<comment type="interaction">
    <interactant intactId="EBI-2835965">
        <id>Q9BT09</id>
    </interactant>
    <interactant intactId="EBI-747754">
        <id>P28799</id>
        <label>GRN</label>
    </interactant>
    <organismsDiffer>false</organismsDiffer>
    <experiments>3</experiments>
</comment>
<comment type="interaction">
    <interactant intactId="EBI-2835965">
        <id>Q9BT09</id>
    </interactant>
    <interactant intactId="EBI-12017638">
        <id>P48051</id>
        <label>KCNJ6</label>
    </interactant>
    <organismsDiffer>false</organismsDiffer>
    <experiments>3</experiments>
</comment>
<comment type="interaction">
    <interactant intactId="EBI-2835965">
        <id>Q9BT09</id>
    </interactant>
    <interactant intactId="EBI-2432309">
        <id>Q92876</id>
        <label>KLK6</label>
    </interactant>
    <organismsDiffer>false</organismsDiffer>
    <experiments>3</experiments>
</comment>
<comment type="interaction">
    <interactant intactId="EBI-2835965">
        <id>Q9BT09</id>
    </interactant>
    <interactant intactId="EBI-396669">
        <id>Q9Y3C5</id>
        <label>RNF11</label>
    </interactant>
    <organismsDiffer>false</organismsDiffer>
    <experiments>3</experiments>
</comment>
<comment type="interaction">
    <interactant intactId="EBI-2835965">
        <id>Q9BT09</id>
    </interactant>
    <interactant intactId="EBI-21899250">
        <id>Q8IW52</id>
        <label>SLITRK4</label>
    </interactant>
    <organismsDiffer>false</organismsDiffer>
    <experiments>2</experiments>
</comment>
<comment type="interaction">
    <interactant intactId="EBI-2835965">
        <id>Q9BT09</id>
    </interactant>
    <interactant intactId="EBI-5235340">
        <id>Q7Z699</id>
        <label>SPRED1</label>
    </interactant>
    <organismsDiffer>false</organismsDiffer>
    <experiments>3</experiments>
</comment>
<comment type="interaction">
    <interactant intactId="EBI-2835965">
        <id>Q9BT09</id>
    </interactant>
    <interactant intactId="EBI-720609">
        <id>O76024</id>
        <label>WFS1</label>
    </interactant>
    <organismsDiffer>false</organismsDiffer>
    <experiments>3</experiments>
</comment>
<comment type="subcellular location">
    <subcellularLocation>
        <location evidence="1">Endoplasmic reticulum</location>
    </subcellularLocation>
</comment>
<comment type="alternative products">
    <event type="alternative splicing"/>
    <isoform>
        <id>Q9BT09-1</id>
        <name>1</name>
        <sequence type="displayed"/>
    </isoform>
    <isoform>
        <id>Q9BT09-2</id>
        <name>2</name>
        <sequence type="described" ref="VSP_030132 VSP_030133"/>
    </isoform>
</comment>
<comment type="disease" evidence="5">
    <disease id="DI-05226">
        <name>Developmental and epileptic encephalopathy 60</name>
        <acronym>DEE60</acronym>
        <description>A form of epileptic encephalopathy, a heterogeneous group of severe early-onset epilepsies characterized by refractory seizures, neurodevelopmental impairment, and poor prognosis. Development is normal prior to seizure onset, after which cognitive and motor delays become apparent. DEE60 is an autosomal recessive condition characterized by onset of seizures in the first months of life.</description>
        <dbReference type="MIM" id="617929"/>
    </disease>
    <text>The disease is caused by variants affecting the gene represented in this entry.</text>
</comment>
<comment type="miscellaneous">
    <molecule>Isoform 2</molecule>
    <text evidence="7">May be produced at very low levels due to a premature stop codon in the mRNA, leading to nonsense-mediated mRNA decay.</text>
</comment>
<comment type="similarity">
    <text evidence="7">Belongs to the canopy family.</text>
</comment>
<comment type="sequence caution" evidence="7">
    <conflict type="frameshift">
        <sequence resource="EMBL-CDS" id="AAB91442"/>
    </conflict>
</comment>
<comment type="sequence caution" evidence="7">
    <conflict type="frameshift">
        <sequence resource="EMBL-CDS" id="AAF28907"/>
    </conflict>
</comment>
<sequence>MDSMPEPASRCLLLLPLLLLLLLLLPAPELGPSQAGAEENDWVRLPSKCEVCKYVAVELKSAFEETGKTKEVIGTGYGILDQKASGVKYTKSDLRLIEVTETICKRLLDYSLHKERTGSNRFAKGMSETFETLHNLVHKGVKVVMDIPYELWNETSAEVADLKKQCDVLVEEFEEVIEDWYRNHQEEDLTEFLCANHVLKGKDTSCLAEQWSGKKGDTAALGGKKSKKKSSRAKAAGGRSSSSKQRKELGGLEGDPSPEEDEGIQKASPLTHSPPDEL</sequence>
<organism>
    <name type="scientific">Homo sapiens</name>
    <name type="common">Human</name>
    <dbReference type="NCBI Taxonomy" id="9606"/>
    <lineage>
        <taxon>Eukaryota</taxon>
        <taxon>Metazoa</taxon>
        <taxon>Chordata</taxon>
        <taxon>Craniata</taxon>
        <taxon>Vertebrata</taxon>
        <taxon>Euteleostomi</taxon>
        <taxon>Mammalia</taxon>
        <taxon>Eutheria</taxon>
        <taxon>Euarchontoglires</taxon>
        <taxon>Primates</taxon>
        <taxon>Haplorrhini</taxon>
        <taxon>Catarrhini</taxon>
        <taxon>Hominidae</taxon>
        <taxon>Homo</taxon>
    </lineage>
</organism>
<dbReference type="EMBL" id="AY358960">
    <property type="protein sequence ID" value="AAQ89319.1"/>
    <property type="molecule type" value="mRNA"/>
</dbReference>
<dbReference type="EMBL" id="AL035587">
    <property type="status" value="NOT_ANNOTATED_CDS"/>
    <property type="molecule type" value="Genomic_DNA"/>
</dbReference>
<dbReference type="EMBL" id="BC004423">
    <property type="protein sequence ID" value="AAH04423.1"/>
    <property type="molecule type" value="mRNA"/>
</dbReference>
<dbReference type="EMBL" id="BC008133">
    <property type="status" value="NOT_ANNOTATED_CDS"/>
    <property type="molecule type" value="mRNA"/>
</dbReference>
<dbReference type="EMBL" id="BC008898">
    <property type="protein sequence ID" value="AAH08898.1"/>
    <property type="molecule type" value="mRNA"/>
</dbReference>
<dbReference type="EMBL" id="BC008961">
    <property type="protein sequence ID" value="AAH08961.1"/>
    <property type="molecule type" value="mRNA"/>
</dbReference>
<dbReference type="EMBL" id="BC022093">
    <property type="protein sequence ID" value="AAH22093.3"/>
    <property type="molecule type" value="mRNA"/>
</dbReference>
<dbReference type="EMBL" id="U80744">
    <property type="protein sequence ID" value="AAB91442.1"/>
    <property type="status" value="ALT_FRAME"/>
    <property type="molecule type" value="mRNA"/>
</dbReference>
<dbReference type="EMBL" id="AF161347">
    <property type="protein sequence ID" value="AAF28907.1"/>
    <property type="status" value="ALT_FRAME"/>
    <property type="molecule type" value="mRNA"/>
</dbReference>
<dbReference type="EMBL" id="AK090425">
    <property type="protein sequence ID" value="BAC03406.1"/>
    <property type="molecule type" value="mRNA"/>
</dbReference>
<dbReference type="CCDS" id="CCDS4875.1">
    <molecule id="Q9BT09-1"/>
</dbReference>
<dbReference type="RefSeq" id="NP_006577.2">
    <molecule id="Q9BT09-1"/>
    <property type="nucleotide sequence ID" value="NM_006586.4"/>
</dbReference>
<dbReference type="BioGRID" id="115934">
    <property type="interactions" value="233"/>
</dbReference>
<dbReference type="FunCoup" id="Q9BT09">
    <property type="interactions" value="742"/>
</dbReference>
<dbReference type="IntAct" id="Q9BT09">
    <property type="interactions" value="84"/>
</dbReference>
<dbReference type="MINT" id="Q9BT09"/>
<dbReference type="STRING" id="9606.ENSP00000361926"/>
<dbReference type="GlyConnect" id="1651">
    <property type="glycosylation" value="3 N-Linked glycans (1 site)"/>
</dbReference>
<dbReference type="GlyCosmos" id="Q9BT09">
    <property type="glycosylation" value="1 site, 3 glycans"/>
</dbReference>
<dbReference type="GlyGen" id="Q9BT09">
    <property type="glycosylation" value="5 sites, 12 N-linked glycans (1 site), 2 O-linked glycans (4 sites)"/>
</dbReference>
<dbReference type="iPTMnet" id="Q9BT09"/>
<dbReference type="PhosphoSitePlus" id="Q9BT09"/>
<dbReference type="BioMuta" id="CNPY3"/>
<dbReference type="DMDM" id="74752319"/>
<dbReference type="jPOST" id="Q9BT09"/>
<dbReference type="MassIVE" id="Q9BT09"/>
<dbReference type="PaxDb" id="9606-ENSP00000361926"/>
<dbReference type="PeptideAtlas" id="Q9BT09"/>
<dbReference type="ProteomicsDB" id="78939">
    <molecule id="Q9BT09-1"/>
</dbReference>
<dbReference type="ProteomicsDB" id="78940">
    <molecule id="Q9BT09-2"/>
</dbReference>
<dbReference type="Pumba" id="Q9BT09"/>
<dbReference type="Antibodypedia" id="16108">
    <property type="antibodies" value="178 antibodies from 30 providers"/>
</dbReference>
<dbReference type="DNASU" id="10695"/>
<dbReference type="Ensembl" id="ENST00000372836.5">
    <molecule id="Q9BT09-1"/>
    <property type="protein sequence ID" value="ENSP00000361926.4"/>
    <property type="gene ID" value="ENSG00000137161.18"/>
</dbReference>
<dbReference type="GeneID" id="10695"/>
<dbReference type="KEGG" id="hsa:10695"/>
<dbReference type="MANE-Select" id="ENST00000372836.5">
    <property type="protein sequence ID" value="ENSP00000361926.4"/>
    <property type="RefSeq nucleotide sequence ID" value="NM_006586.5"/>
    <property type="RefSeq protein sequence ID" value="NP_006577.2"/>
</dbReference>
<dbReference type="UCSC" id="uc003ota.5">
    <molecule id="Q9BT09-1"/>
    <property type="organism name" value="human"/>
</dbReference>
<dbReference type="AGR" id="HGNC:11968"/>
<dbReference type="CTD" id="10695"/>
<dbReference type="DisGeNET" id="10695"/>
<dbReference type="GeneCards" id="CNPY3"/>
<dbReference type="HGNC" id="HGNC:11968">
    <property type="gene designation" value="CNPY3"/>
</dbReference>
<dbReference type="HPA" id="ENSG00000137161">
    <property type="expression patterns" value="Low tissue specificity"/>
</dbReference>
<dbReference type="MalaCards" id="CNPY3"/>
<dbReference type="MIM" id="610774">
    <property type="type" value="gene"/>
</dbReference>
<dbReference type="MIM" id="617929">
    <property type="type" value="phenotype"/>
</dbReference>
<dbReference type="neXtProt" id="NX_Q9BT09"/>
<dbReference type="OpenTargets" id="ENSG00000137161"/>
<dbReference type="Orphanet" id="3451">
    <property type="disease" value="Infantile epileptic spasms syndrome"/>
</dbReference>
<dbReference type="PharmGKB" id="PA162382601"/>
<dbReference type="VEuPathDB" id="HostDB:ENSG00000137161"/>
<dbReference type="eggNOG" id="KOG4052">
    <property type="taxonomic scope" value="Eukaryota"/>
</dbReference>
<dbReference type="GeneTree" id="ENSGT00390000014072"/>
<dbReference type="HOGENOM" id="CLU_078068_0_0_1"/>
<dbReference type="InParanoid" id="Q9BT09"/>
<dbReference type="OMA" id="GQDKACL"/>
<dbReference type="OrthoDB" id="6020060at2759"/>
<dbReference type="PAN-GO" id="Q9BT09">
    <property type="GO annotations" value="1 GO annotation based on evolutionary models"/>
</dbReference>
<dbReference type="PhylomeDB" id="Q9BT09"/>
<dbReference type="TreeFam" id="TF318951"/>
<dbReference type="PathwayCommons" id="Q9BT09"/>
<dbReference type="Reactome" id="R-HSA-1679131">
    <property type="pathway name" value="Trafficking and processing of endosomal TLR"/>
</dbReference>
<dbReference type="SignaLink" id="Q9BT09"/>
<dbReference type="BioGRID-ORCS" id="10695">
    <property type="hits" value="6 hits in 1154 CRISPR screens"/>
</dbReference>
<dbReference type="ChiTaRS" id="CNPY3">
    <property type="organism name" value="human"/>
</dbReference>
<dbReference type="GenomeRNAi" id="10695"/>
<dbReference type="Pharos" id="Q9BT09">
    <property type="development level" value="Tbio"/>
</dbReference>
<dbReference type="PRO" id="PR:Q9BT09"/>
<dbReference type="Proteomes" id="UP000005640">
    <property type="component" value="Chromosome 6"/>
</dbReference>
<dbReference type="RNAct" id="Q9BT09">
    <property type="molecule type" value="protein"/>
</dbReference>
<dbReference type="Bgee" id="ENSG00000137161">
    <property type="expression patterns" value="Expressed in monocyte and 199 other cell types or tissues"/>
</dbReference>
<dbReference type="ExpressionAtlas" id="Q9BT09">
    <property type="expression patterns" value="baseline and differential"/>
</dbReference>
<dbReference type="GO" id="GO:0005788">
    <property type="term" value="C:endoplasmic reticulum lumen"/>
    <property type="evidence" value="ECO:0000304"/>
    <property type="project" value="Reactome"/>
</dbReference>
<dbReference type="GO" id="GO:0005102">
    <property type="term" value="F:signaling receptor binding"/>
    <property type="evidence" value="ECO:0000318"/>
    <property type="project" value="GO_Central"/>
</dbReference>
<dbReference type="GO" id="GO:0045087">
    <property type="term" value="P:innate immune response"/>
    <property type="evidence" value="ECO:0007669"/>
    <property type="project" value="UniProtKB-KW"/>
</dbReference>
<dbReference type="InterPro" id="IPR021852">
    <property type="entry name" value="DUF3456"/>
</dbReference>
<dbReference type="PANTHER" id="PTHR15382">
    <property type="entry name" value="CTG4A-RELATED"/>
    <property type="match status" value="1"/>
</dbReference>
<dbReference type="PANTHER" id="PTHR15382:SF2">
    <property type="entry name" value="PROTEIN CANOPY HOMOLOG 3"/>
    <property type="match status" value="1"/>
</dbReference>
<dbReference type="Pfam" id="PF11938">
    <property type="entry name" value="DUF3456"/>
    <property type="match status" value="1"/>
</dbReference>
<reference key="1">
    <citation type="journal article" date="2003" name="Genome Res.">
        <title>The secreted protein discovery initiative (SPDI), a large-scale effort to identify novel human secreted and transmembrane proteins: a bioinformatics assessment.</title>
        <authorList>
            <person name="Clark H.F."/>
            <person name="Gurney A.L."/>
            <person name="Abaya E."/>
            <person name="Baker K."/>
            <person name="Baldwin D.T."/>
            <person name="Brush J."/>
            <person name="Chen J."/>
            <person name="Chow B."/>
            <person name="Chui C."/>
            <person name="Crowley C."/>
            <person name="Currell B."/>
            <person name="Deuel B."/>
            <person name="Dowd P."/>
            <person name="Eaton D."/>
            <person name="Foster J.S."/>
            <person name="Grimaldi C."/>
            <person name="Gu Q."/>
            <person name="Hass P.E."/>
            <person name="Heldens S."/>
            <person name="Huang A."/>
            <person name="Kim H.S."/>
            <person name="Klimowski L."/>
            <person name="Jin Y."/>
            <person name="Johnson S."/>
            <person name="Lee J."/>
            <person name="Lewis L."/>
            <person name="Liao D."/>
            <person name="Mark M.R."/>
            <person name="Robbie E."/>
            <person name="Sanchez C."/>
            <person name="Schoenfeld J."/>
            <person name="Seshagiri S."/>
            <person name="Simmons L."/>
            <person name="Singh J."/>
            <person name="Smith V."/>
            <person name="Stinson J."/>
            <person name="Vagts A."/>
            <person name="Vandlen R.L."/>
            <person name="Watanabe C."/>
            <person name="Wieand D."/>
            <person name="Woods K."/>
            <person name="Xie M.-H."/>
            <person name="Yansura D.G."/>
            <person name="Yi S."/>
            <person name="Yu G."/>
            <person name="Yuan J."/>
            <person name="Zhang M."/>
            <person name="Zhang Z."/>
            <person name="Goddard A.D."/>
            <person name="Wood W.I."/>
            <person name="Godowski P.J."/>
            <person name="Gray A.M."/>
        </authorList>
    </citation>
    <scope>NUCLEOTIDE SEQUENCE [LARGE SCALE MRNA] (ISOFORM 1)</scope>
</reference>
<reference key="2">
    <citation type="journal article" date="2003" name="Nature">
        <title>The DNA sequence and analysis of human chromosome 6.</title>
        <authorList>
            <person name="Mungall A.J."/>
            <person name="Palmer S.A."/>
            <person name="Sims S.K."/>
            <person name="Edwards C.A."/>
            <person name="Ashurst J.L."/>
            <person name="Wilming L."/>
            <person name="Jones M.C."/>
            <person name="Horton R."/>
            <person name="Hunt S.E."/>
            <person name="Scott C.E."/>
            <person name="Gilbert J.G.R."/>
            <person name="Clamp M.E."/>
            <person name="Bethel G."/>
            <person name="Milne S."/>
            <person name="Ainscough R."/>
            <person name="Almeida J.P."/>
            <person name="Ambrose K.D."/>
            <person name="Andrews T.D."/>
            <person name="Ashwell R.I.S."/>
            <person name="Babbage A.K."/>
            <person name="Bagguley C.L."/>
            <person name="Bailey J."/>
            <person name="Banerjee R."/>
            <person name="Barker D.J."/>
            <person name="Barlow K.F."/>
            <person name="Bates K."/>
            <person name="Beare D.M."/>
            <person name="Beasley H."/>
            <person name="Beasley O."/>
            <person name="Bird C.P."/>
            <person name="Blakey S.E."/>
            <person name="Bray-Allen S."/>
            <person name="Brook J."/>
            <person name="Brown A.J."/>
            <person name="Brown J.Y."/>
            <person name="Burford D.C."/>
            <person name="Burrill W."/>
            <person name="Burton J."/>
            <person name="Carder C."/>
            <person name="Carter N.P."/>
            <person name="Chapman J.C."/>
            <person name="Clark S.Y."/>
            <person name="Clark G."/>
            <person name="Clee C.M."/>
            <person name="Clegg S."/>
            <person name="Cobley V."/>
            <person name="Collier R.E."/>
            <person name="Collins J.E."/>
            <person name="Colman L.K."/>
            <person name="Corby N.R."/>
            <person name="Coville G.J."/>
            <person name="Culley K.M."/>
            <person name="Dhami P."/>
            <person name="Davies J."/>
            <person name="Dunn M."/>
            <person name="Earthrowl M.E."/>
            <person name="Ellington A.E."/>
            <person name="Evans K.A."/>
            <person name="Faulkner L."/>
            <person name="Francis M.D."/>
            <person name="Frankish A."/>
            <person name="Frankland J."/>
            <person name="French L."/>
            <person name="Garner P."/>
            <person name="Garnett J."/>
            <person name="Ghori M.J."/>
            <person name="Gilby L.M."/>
            <person name="Gillson C.J."/>
            <person name="Glithero R.J."/>
            <person name="Grafham D.V."/>
            <person name="Grant M."/>
            <person name="Gribble S."/>
            <person name="Griffiths C."/>
            <person name="Griffiths M.N.D."/>
            <person name="Hall R."/>
            <person name="Halls K.S."/>
            <person name="Hammond S."/>
            <person name="Harley J.L."/>
            <person name="Hart E.A."/>
            <person name="Heath P.D."/>
            <person name="Heathcott R."/>
            <person name="Holmes S.J."/>
            <person name="Howden P.J."/>
            <person name="Howe K.L."/>
            <person name="Howell G.R."/>
            <person name="Huckle E."/>
            <person name="Humphray S.J."/>
            <person name="Humphries M.D."/>
            <person name="Hunt A.R."/>
            <person name="Johnson C.M."/>
            <person name="Joy A.A."/>
            <person name="Kay M."/>
            <person name="Keenan S.J."/>
            <person name="Kimberley A.M."/>
            <person name="King A."/>
            <person name="Laird G.K."/>
            <person name="Langford C."/>
            <person name="Lawlor S."/>
            <person name="Leongamornlert D.A."/>
            <person name="Leversha M."/>
            <person name="Lloyd C.R."/>
            <person name="Lloyd D.M."/>
            <person name="Loveland J.E."/>
            <person name="Lovell J."/>
            <person name="Martin S."/>
            <person name="Mashreghi-Mohammadi M."/>
            <person name="Maslen G.L."/>
            <person name="Matthews L."/>
            <person name="McCann O.T."/>
            <person name="McLaren S.J."/>
            <person name="McLay K."/>
            <person name="McMurray A."/>
            <person name="Moore M.J.F."/>
            <person name="Mullikin J.C."/>
            <person name="Niblett D."/>
            <person name="Nickerson T."/>
            <person name="Novik K.L."/>
            <person name="Oliver K."/>
            <person name="Overton-Larty E.K."/>
            <person name="Parker A."/>
            <person name="Patel R."/>
            <person name="Pearce A.V."/>
            <person name="Peck A.I."/>
            <person name="Phillimore B.J.C.T."/>
            <person name="Phillips S."/>
            <person name="Plumb R.W."/>
            <person name="Porter K.M."/>
            <person name="Ramsey Y."/>
            <person name="Ranby S.A."/>
            <person name="Rice C.M."/>
            <person name="Ross M.T."/>
            <person name="Searle S.M."/>
            <person name="Sehra H.K."/>
            <person name="Sheridan E."/>
            <person name="Skuce C.D."/>
            <person name="Smith S."/>
            <person name="Smith M."/>
            <person name="Spraggon L."/>
            <person name="Squares S.L."/>
            <person name="Steward C.A."/>
            <person name="Sycamore N."/>
            <person name="Tamlyn-Hall G."/>
            <person name="Tester J."/>
            <person name="Theaker A.J."/>
            <person name="Thomas D.W."/>
            <person name="Thorpe A."/>
            <person name="Tracey A."/>
            <person name="Tromans A."/>
            <person name="Tubby B."/>
            <person name="Wall M."/>
            <person name="Wallis J.M."/>
            <person name="West A.P."/>
            <person name="White S.S."/>
            <person name="Whitehead S.L."/>
            <person name="Whittaker H."/>
            <person name="Wild A."/>
            <person name="Willey D.J."/>
            <person name="Wilmer T.E."/>
            <person name="Wood J.M."/>
            <person name="Wray P.W."/>
            <person name="Wyatt J.C."/>
            <person name="Young L."/>
            <person name="Younger R.M."/>
            <person name="Bentley D.R."/>
            <person name="Coulson A."/>
            <person name="Durbin R.M."/>
            <person name="Hubbard T."/>
            <person name="Sulston J.E."/>
            <person name="Dunham I."/>
            <person name="Rogers J."/>
            <person name="Beck S."/>
        </authorList>
    </citation>
    <scope>NUCLEOTIDE SEQUENCE [LARGE SCALE GENOMIC DNA]</scope>
</reference>
<reference key="3">
    <citation type="journal article" date="2004" name="Genome Res.">
        <title>The status, quality, and expansion of the NIH full-length cDNA project: the Mammalian Gene Collection (MGC).</title>
        <authorList>
            <consortium name="The MGC Project Team"/>
        </authorList>
    </citation>
    <scope>NUCLEOTIDE SEQUENCE [LARGE SCALE MRNA] (ISOFORMS 1 AND 2)</scope>
    <source>
        <tissue>Cervix</tissue>
        <tissue>Colon</tissue>
        <tissue>Lung</tissue>
    </source>
</reference>
<reference key="4">
    <citation type="journal article" date="1997" name="Hum. Genet.">
        <title>cDNAs with long CAG trinucleotide repeats from human brain.</title>
        <authorList>
            <person name="Margolis R.L."/>
            <person name="Abraham M.R."/>
            <person name="Gatchell S.B."/>
            <person name="Li S.-H."/>
            <person name="Kidwai A.S."/>
            <person name="Breschel T.S."/>
            <person name="Stine O.C."/>
            <person name="Callahan C."/>
            <person name="McInnis M.G."/>
            <person name="Ross C.A."/>
        </authorList>
    </citation>
    <scope>NUCLEOTIDE SEQUENCE [MRNA] OF 1-192 (ISOFORM 1)</scope>
    <source>
        <tissue>Brain cortex</tissue>
    </source>
</reference>
<reference key="5">
    <citation type="submission" date="1999-05" db="EMBL/GenBank/DDBJ databases">
        <title>Human partial CDS from CD34+ stem cells.</title>
        <authorList>
            <person name="Ye M."/>
            <person name="Zhang Q.-H."/>
            <person name="Zhou J."/>
            <person name="Shen Y."/>
            <person name="Wu X.-Y."/>
            <person name="Guan Z.Q."/>
            <person name="Wang L."/>
            <person name="Fan H.-Y."/>
            <person name="Mao Y.-F."/>
            <person name="Dai M."/>
            <person name="Huang Q.-H."/>
            <person name="Chen S.-J."/>
            <person name="Chen Z."/>
        </authorList>
    </citation>
    <scope>NUCLEOTIDE SEQUENCE [LARGE SCALE MRNA] OF 153-278 (ISOFORM 1)</scope>
    <source>
        <tissue>Umbilical cord blood</tissue>
    </source>
</reference>
<reference key="6">
    <citation type="journal article" date="2004" name="Nat. Genet.">
        <title>Complete sequencing and characterization of 21,243 full-length human cDNAs.</title>
        <authorList>
            <person name="Ota T."/>
            <person name="Suzuki Y."/>
            <person name="Nishikawa T."/>
            <person name="Otsuki T."/>
            <person name="Sugiyama T."/>
            <person name="Irie R."/>
            <person name="Wakamatsu A."/>
            <person name="Hayashi K."/>
            <person name="Sato H."/>
            <person name="Nagai K."/>
            <person name="Kimura K."/>
            <person name="Makita H."/>
            <person name="Sekine M."/>
            <person name="Obayashi M."/>
            <person name="Nishi T."/>
            <person name="Shibahara T."/>
            <person name="Tanaka T."/>
            <person name="Ishii S."/>
            <person name="Yamamoto J."/>
            <person name="Saito K."/>
            <person name="Kawai Y."/>
            <person name="Isono Y."/>
            <person name="Nakamura Y."/>
            <person name="Nagahari K."/>
            <person name="Murakami K."/>
            <person name="Yasuda T."/>
            <person name="Iwayanagi T."/>
            <person name="Wagatsuma M."/>
            <person name="Shiratori A."/>
            <person name="Sudo H."/>
            <person name="Hosoiri T."/>
            <person name="Kaku Y."/>
            <person name="Kodaira H."/>
            <person name="Kondo H."/>
            <person name="Sugawara M."/>
            <person name="Takahashi M."/>
            <person name="Kanda K."/>
            <person name="Yokoi T."/>
            <person name="Furuya T."/>
            <person name="Kikkawa E."/>
            <person name="Omura Y."/>
            <person name="Abe K."/>
            <person name="Kamihara K."/>
            <person name="Katsuta N."/>
            <person name="Sato K."/>
            <person name="Tanikawa M."/>
            <person name="Yamazaki M."/>
            <person name="Ninomiya K."/>
            <person name="Ishibashi T."/>
            <person name="Yamashita H."/>
            <person name="Murakawa K."/>
            <person name="Fujimori K."/>
            <person name="Tanai H."/>
            <person name="Kimata M."/>
            <person name="Watanabe M."/>
            <person name="Hiraoka S."/>
            <person name="Chiba Y."/>
            <person name="Ishida S."/>
            <person name="Ono Y."/>
            <person name="Takiguchi S."/>
            <person name="Watanabe S."/>
            <person name="Yosida M."/>
            <person name="Hotuta T."/>
            <person name="Kusano J."/>
            <person name="Kanehori K."/>
            <person name="Takahashi-Fujii A."/>
            <person name="Hara H."/>
            <person name="Tanase T.-O."/>
            <person name="Nomura Y."/>
            <person name="Togiya S."/>
            <person name="Komai F."/>
            <person name="Hara R."/>
            <person name="Takeuchi K."/>
            <person name="Arita M."/>
            <person name="Imose N."/>
            <person name="Musashino K."/>
            <person name="Yuuki H."/>
            <person name="Oshima A."/>
            <person name="Sasaki N."/>
            <person name="Aotsuka S."/>
            <person name="Yoshikawa Y."/>
            <person name="Matsunawa H."/>
            <person name="Ichihara T."/>
            <person name="Shiohata N."/>
            <person name="Sano S."/>
            <person name="Moriya S."/>
            <person name="Momiyama H."/>
            <person name="Satoh N."/>
            <person name="Takami S."/>
            <person name="Terashima Y."/>
            <person name="Suzuki O."/>
            <person name="Nakagawa S."/>
            <person name="Senoh A."/>
            <person name="Mizoguchi H."/>
            <person name="Goto Y."/>
            <person name="Shimizu F."/>
            <person name="Wakebe H."/>
            <person name="Hishigaki H."/>
            <person name="Watanabe T."/>
            <person name="Sugiyama A."/>
            <person name="Takemoto M."/>
            <person name="Kawakami B."/>
            <person name="Yamazaki M."/>
            <person name="Watanabe K."/>
            <person name="Kumagai A."/>
            <person name="Itakura S."/>
            <person name="Fukuzumi Y."/>
            <person name="Fujimori Y."/>
            <person name="Komiyama M."/>
            <person name="Tashiro H."/>
            <person name="Tanigami A."/>
            <person name="Fujiwara T."/>
            <person name="Ono T."/>
            <person name="Yamada K."/>
            <person name="Fujii Y."/>
            <person name="Ozaki K."/>
            <person name="Hirao M."/>
            <person name="Ohmori Y."/>
            <person name="Kawabata A."/>
            <person name="Hikiji T."/>
            <person name="Kobatake N."/>
            <person name="Inagaki H."/>
            <person name="Ikema Y."/>
            <person name="Okamoto S."/>
            <person name="Okitani R."/>
            <person name="Kawakami T."/>
            <person name="Noguchi S."/>
            <person name="Itoh T."/>
            <person name="Shigeta K."/>
            <person name="Senba T."/>
            <person name="Matsumura K."/>
            <person name="Nakajima Y."/>
            <person name="Mizuno T."/>
            <person name="Morinaga M."/>
            <person name="Sasaki M."/>
            <person name="Togashi T."/>
            <person name="Oyama M."/>
            <person name="Hata H."/>
            <person name="Watanabe M."/>
            <person name="Komatsu T."/>
            <person name="Mizushima-Sugano J."/>
            <person name="Satoh T."/>
            <person name="Shirai Y."/>
            <person name="Takahashi Y."/>
            <person name="Nakagawa K."/>
            <person name="Okumura K."/>
            <person name="Nagase T."/>
            <person name="Nomura N."/>
            <person name="Kikuchi H."/>
            <person name="Masuho Y."/>
            <person name="Yamashita R."/>
            <person name="Nakai K."/>
            <person name="Yada T."/>
            <person name="Nakamura Y."/>
            <person name="Ohara O."/>
            <person name="Isogai T."/>
            <person name="Sugano S."/>
        </authorList>
    </citation>
    <scope>NUCLEOTIDE SEQUENCE [LARGE SCALE MRNA] OF 165-278 (ISOFORM 1)</scope>
    <source>
        <tissue>Spleen</tissue>
    </source>
</reference>
<reference key="7">
    <citation type="journal article" date="2009" name="J. Proteome Res.">
        <title>Glycoproteomics analysis of human liver tissue by combination of multiple enzyme digestion and hydrazide chemistry.</title>
        <authorList>
            <person name="Chen R."/>
            <person name="Jiang X."/>
            <person name="Sun D."/>
            <person name="Han G."/>
            <person name="Wang F."/>
            <person name="Ye M."/>
            <person name="Wang L."/>
            <person name="Zou H."/>
        </authorList>
    </citation>
    <scope>GLYCOSYLATION [LARGE SCALE ANALYSIS] AT ASN-153</scope>
    <source>
        <tissue>Liver</tissue>
    </source>
</reference>
<reference key="8">
    <citation type="journal article" date="2010" name="Nat. Commun.">
        <title>Folding of Toll-like receptors by the HSP90 paralogue gp96 requires a substrate-specific cochaperone.</title>
        <authorList>
            <person name="Liu B."/>
            <person name="Yang Y."/>
            <person name="Qiu Z."/>
            <person name="Staron M."/>
            <person name="Hong F."/>
            <person name="Li Y."/>
            <person name="Wu S."/>
            <person name="Li Y."/>
            <person name="Hao B."/>
            <person name="Bona R."/>
            <person name="Han D."/>
            <person name="Li Z."/>
        </authorList>
    </citation>
    <scope>INTERACTION WITH HSP90B1</scope>
</reference>
<reference key="9">
    <citation type="journal article" date="2012" name="Nat. Commun.">
        <authorList>
            <person name="Liu B."/>
            <person name="Yang Y."/>
            <person name="Qiu Z."/>
            <person name="Staron M."/>
            <person name="Hong F."/>
            <person name="Li Y."/>
            <person name="Wu S."/>
            <person name="Li Y."/>
            <person name="Hao B."/>
            <person name="Bona R."/>
            <person name="Han D."/>
            <person name="Li Z."/>
        </authorList>
    </citation>
    <scope>ERRATUM OF PUBMED:20865800</scope>
</reference>
<reference key="10">
    <citation type="journal article" date="2011" name="BMC Syst. Biol.">
        <title>Initial characterization of the human central proteome.</title>
        <authorList>
            <person name="Burkard T.R."/>
            <person name="Planyavsky M."/>
            <person name="Kaupe I."/>
            <person name="Breitwieser F.P."/>
            <person name="Buerckstuemmer T."/>
            <person name="Bennett K.L."/>
            <person name="Superti-Furga G."/>
            <person name="Colinge J."/>
        </authorList>
    </citation>
    <scope>IDENTIFICATION BY MASS SPECTROMETRY [LARGE SCALE ANALYSIS]</scope>
</reference>
<reference key="11">
    <citation type="journal article" date="2014" name="J. Proteomics">
        <title>An enzyme assisted RP-RPLC approach for in-depth analysis of human liver phosphoproteome.</title>
        <authorList>
            <person name="Bian Y."/>
            <person name="Song C."/>
            <person name="Cheng K."/>
            <person name="Dong M."/>
            <person name="Wang F."/>
            <person name="Huang J."/>
            <person name="Sun D."/>
            <person name="Wang L."/>
            <person name="Ye M."/>
            <person name="Zou H."/>
        </authorList>
    </citation>
    <scope>IDENTIFICATION BY MASS SPECTROMETRY [LARGE SCALE ANALYSIS]</scope>
    <source>
        <tissue>Liver</tissue>
    </source>
</reference>
<reference key="12">
    <citation type="journal article" date="2015" name="Proteomics">
        <title>N-terminome analysis of the human mitochondrial proteome.</title>
        <authorList>
            <person name="Vaca Jacome A.S."/>
            <person name="Rabilloud T."/>
            <person name="Schaeffer-Reiss C."/>
            <person name="Rompais M."/>
            <person name="Ayoub D."/>
            <person name="Lane L."/>
            <person name="Bairoch A."/>
            <person name="Van Dorsselaer A."/>
            <person name="Carapito C."/>
        </authorList>
    </citation>
    <scope>IDENTIFICATION BY MASS SPECTROMETRY [LARGE SCALE ANALYSIS]</scope>
</reference>
<reference key="13">
    <citation type="journal article" date="2018" name="Am. J. Hum. Genet.">
        <title>Biallelic Variants in CNPY3, Encoding an Endoplasmic Reticulum Chaperone, Cause Early-Onset Epileptic Encephalopathy.</title>
        <authorList>
            <person name="Mutoh H."/>
            <person name="Kato M."/>
            <person name="Akita T."/>
            <person name="Shibata T."/>
            <person name="Wakamoto H."/>
            <person name="Ikeda H."/>
            <person name="Kitaura H."/>
            <person name="Aoto K."/>
            <person name="Nakashima M."/>
            <person name="Wang T."/>
            <person name="Ohba C."/>
            <person name="Miyatake S."/>
            <person name="Miyake N."/>
            <person name="Kakita A."/>
            <person name="Miyake K."/>
            <person name="Fukuda A."/>
            <person name="Matsumoto N."/>
            <person name="Saitsu H."/>
        </authorList>
    </citation>
    <scope>INVOLVEMENT IN DEE60</scope>
    <scope>VARIANT DEE60 ARG-125</scope>
</reference>
<evidence type="ECO:0000250" key="1"/>
<evidence type="ECO:0000255" key="2"/>
<evidence type="ECO:0000256" key="3">
    <source>
        <dbReference type="SAM" id="MobiDB-lite"/>
    </source>
</evidence>
<evidence type="ECO:0000269" key="4">
    <source>
    </source>
</evidence>
<evidence type="ECO:0000269" key="5">
    <source>
    </source>
</evidence>
<evidence type="ECO:0000303" key="6">
    <source>
    </source>
</evidence>
<evidence type="ECO:0000305" key="7"/>
<protein>
    <recommendedName>
        <fullName>Protein canopy homolog 3</fullName>
    </recommendedName>
    <alternativeName>
        <fullName>CTG repeat protein 4a</fullName>
    </alternativeName>
    <alternativeName>
        <fullName>Expanded repeat-domain protein CAG/CTG 5</fullName>
    </alternativeName>
    <alternativeName>
        <fullName>Protein associated with TLR4</fullName>
    </alternativeName>
    <alternativeName>
        <fullName>Trinucleotide repeat-containing gene 5 protein</fullName>
    </alternativeName>
</protein>
<proteinExistence type="evidence at protein level"/>